<proteinExistence type="inferred from homology"/>
<feature type="signal peptide" evidence="1">
    <location>
        <begin position="1"/>
        <end position="19"/>
    </location>
</feature>
<feature type="chain" id="PRO_0000043367" description="Thiol:disulfide interchange protein DsbA">
    <location>
        <begin position="20"/>
        <end position="208"/>
    </location>
</feature>
<feature type="domain" description="Thioredoxin" evidence="2">
    <location>
        <begin position="20"/>
        <end position="150"/>
    </location>
</feature>
<feature type="disulfide bond" description="Redox-active" evidence="2">
    <location>
        <begin position="49"/>
        <end position="52"/>
    </location>
</feature>
<comment type="function">
    <text evidence="1">Required for disulfide bond formation in some periplasmic proteins such as PhoA or OmpA. Acts by transferring its disulfide bond to other proteins and is reduced in the process. DsbA is reoxidized by DsbB. It is required for pilus biogenesis (By similarity).</text>
</comment>
<comment type="subcellular location">
    <subcellularLocation>
        <location evidence="1">Periplasm</location>
    </subcellularLocation>
</comment>
<comment type="similarity">
    <text evidence="3">Belongs to the thioredoxin family. DsbA subfamily.</text>
</comment>
<dbReference type="EMBL" id="AE005174">
    <property type="protein sequence ID" value="AAG59049.1"/>
    <property type="molecule type" value="Genomic_DNA"/>
</dbReference>
<dbReference type="EMBL" id="BA000007">
    <property type="protein sequence ID" value="BAB38206.1"/>
    <property type="molecule type" value="Genomic_DNA"/>
</dbReference>
<dbReference type="PIR" id="E86073">
    <property type="entry name" value="E86073"/>
</dbReference>
<dbReference type="PIR" id="G91226">
    <property type="entry name" value="G91226"/>
</dbReference>
<dbReference type="RefSeq" id="NP_312810.1">
    <property type="nucleotide sequence ID" value="NC_002695.1"/>
</dbReference>
<dbReference type="RefSeq" id="WP_000725337.1">
    <property type="nucleotide sequence ID" value="NZ_VOAI01000016.1"/>
</dbReference>
<dbReference type="BMRB" id="P0AEG5"/>
<dbReference type="SMR" id="P0AEG5"/>
<dbReference type="STRING" id="155864.Z5392"/>
<dbReference type="GeneID" id="915115"/>
<dbReference type="GeneID" id="93778077"/>
<dbReference type="KEGG" id="ece:Z5392"/>
<dbReference type="KEGG" id="ecs:ECs_4783"/>
<dbReference type="PATRIC" id="fig|386585.9.peg.4992"/>
<dbReference type="eggNOG" id="COG1651">
    <property type="taxonomic scope" value="Bacteria"/>
</dbReference>
<dbReference type="HOGENOM" id="CLU_088255_3_0_6"/>
<dbReference type="OMA" id="NAIHKQK"/>
<dbReference type="Proteomes" id="UP000000558">
    <property type="component" value="Chromosome"/>
</dbReference>
<dbReference type="Proteomes" id="UP000002519">
    <property type="component" value="Chromosome"/>
</dbReference>
<dbReference type="GO" id="GO:0042597">
    <property type="term" value="C:periplasmic space"/>
    <property type="evidence" value="ECO:0007669"/>
    <property type="project" value="UniProtKB-SubCell"/>
</dbReference>
<dbReference type="GO" id="GO:0015036">
    <property type="term" value="F:disulfide oxidoreductase activity"/>
    <property type="evidence" value="ECO:0007669"/>
    <property type="project" value="UniProtKB-ARBA"/>
</dbReference>
<dbReference type="CDD" id="cd03019">
    <property type="entry name" value="DsbA_DsbA"/>
    <property type="match status" value="1"/>
</dbReference>
<dbReference type="FunFam" id="3.40.30.10:FF:000052">
    <property type="entry name" value="Thiol:disulfide interchange protein"/>
    <property type="match status" value="1"/>
</dbReference>
<dbReference type="Gene3D" id="3.40.30.10">
    <property type="entry name" value="Glutaredoxin"/>
    <property type="match status" value="2"/>
</dbReference>
<dbReference type="InterPro" id="IPR001853">
    <property type="entry name" value="DSBA-like_thioredoxin_dom"/>
</dbReference>
<dbReference type="InterPro" id="IPR023205">
    <property type="entry name" value="DsbA/DsbL"/>
</dbReference>
<dbReference type="InterPro" id="IPR050824">
    <property type="entry name" value="Thiol_disulfide_DsbA"/>
</dbReference>
<dbReference type="InterPro" id="IPR036249">
    <property type="entry name" value="Thioredoxin-like_sf"/>
</dbReference>
<dbReference type="InterPro" id="IPR017937">
    <property type="entry name" value="Thioredoxin_CS"/>
</dbReference>
<dbReference type="InterPro" id="IPR013766">
    <property type="entry name" value="Thioredoxin_domain"/>
</dbReference>
<dbReference type="NCBIfam" id="NF008198">
    <property type="entry name" value="PRK10954.1"/>
    <property type="match status" value="1"/>
</dbReference>
<dbReference type="PANTHER" id="PTHR35891">
    <property type="entry name" value="THIOL:DISULFIDE INTERCHANGE PROTEIN DSBA"/>
    <property type="match status" value="1"/>
</dbReference>
<dbReference type="PANTHER" id="PTHR35891:SF2">
    <property type="entry name" value="THIOL:DISULFIDE INTERCHANGE PROTEIN DSBA"/>
    <property type="match status" value="1"/>
</dbReference>
<dbReference type="Pfam" id="PF01323">
    <property type="entry name" value="DSBA"/>
    <property type="match status" value="1"/>
</dbReference>
<dbReference type="PIRSF" id="PIRSF001488">
    <property type="entry name" value="Tdi_protein"/>
    <property type="match status" value="1"/>
</dbReference>
<dbReference type="SUPFAM" id="SSF52833">
    <property type="entry name" value="Thioredoxin-like"/>
    <property type="match status" value="1"/>
</dbReference>
<dbReference type="PROSITE" id="PS00194">
    <property type="entry name" value="THIOREDOXIN_1"/>
    <property type="match status" value="1"/>
</dbReference>
<dbReference type="PROSITE" id="PS51352">
    <property type="entry name" value="THIOREDOXIN_2"/>
    <property type="match status" value="1"/>
</dbReference>
<gene>
    <name type="primary">dsbA</name>
    <name type="ordered locus">Z5392</name>
    <name type="ordered locus">ECs4783</name>
</gene>
<reference key="1">
    <citation type="journal article" date="2001" name="Nature">
        <title>Genome sequence of enterohaemorrhagic Escherichia coli O157:H7.</title>
        <authorList>
            <person name="Perna N.T."/>
            <person name="Plunkett G. III"/>
            <person name="Burland V."/>
            <person name="Mau B."/>
            <person name="Glasner J.D."/>
            <person name="Rose D.J."/>
            <person name="Mayhew G.F."/>
            <person name="Evans P.S."/>
            <person name="Gregor J."/>
            <person name="Kirkpatrick H.A."/>
            <person name="Posfai G."/>
            <person name="Hackett J."/>
            <person name="Klink S."/>
            <person name="Boutin A."/>
            <person name="Shao Y."/>
            <person name="Miller L."/>
            <person name="Grotbeck E.J."/>
            <person name="Davis N.W."/>
            <person name="Lim A."/>
            <person name="Dimalanta E.T."/>
            <person name="Potamousis K."/>
            <person name="Apodaca J."/>
            <person name="Anantharaman T.S."/>
            <person name="Lin J."/>
            <person name="Yen G."/>
            <person name="Schwartz D.C."/>
            <person name="Welch R.A."/>
            <person name="Blattner F.R."/>
        </authorList>
    </citation>
    <scope>NUCLEOTIDE SEQUENCE [LARGE SCALE GENOMIC DNA]</scope>
    <source>
        <strain>O157:H7 / EDL933 / ATCC 700927 / EHEC</strain>
    </source>
</reference>
<reference key="2">
    <citation type="journal article" date="2001" name="DNA Res.">
        <title>Complete genome sequence of enterohemorrhagic Escherichia coli O157:H7 and genomic comparison with a laboratory strain K-12.</title>
        <authorList>
            <person name="Hayashi T."/>
            <person name="Makino K."/>
            <person name="Ohnishi M."/>
            <person name="Kurokawa K."/>
            <person name="Ishii K."/>
            <person name="Yokoyama K."/>
            <person name="Han C.-G."/>
            <person name="Ohtsubo E."/>
            <person name="Nakayama K."/>
            <person name="Murata T."/>
            <person name="Tanaka M."/>
            <person name="Tobe T."/>
            <person name="Iida T."/>
            <person name="Takami H."/>
            <person name="Honda T."/>
            <person name="Sasakawa C."/>
            <person name="Ogasawara N."/>
            <person name="Yasunaga T."/>
            <person name="Kuhara S."/>
            <person name="Shiba T."/>
            <person name="Hattori M."/>
            <person name="Shinagawa H."/>
        </authorList>
    </citation>
    <scope>NUCLEOTIDE SEQUENCE [LARGE SCALE GENOMIC DNA]</scope>
    <source>
        <strain>O157:H7 / Sakai / RIMD 0509952 / EHEC</strain>
    </source>
</reference>
<accession>P0AEG5</accession>
<accession>P24991</accession>
<accession>Q46951</accession>
<accession>Q46952</accession>
<evidence type="ECO:0000250" key="1"/>
<evidence type="ECO:0000255" key="2">
    <source>
        <dbReference type="PROSITE-ProRule" id="PRU00691"/>
    </source>
</evidence>
<evidence type="ECO:0000305" key="3"/>
<sequence>MKKIWLALAGLVLAFSASAAQYEDGKQYTTLEKPVAGAPQVLEFFSFFCPHCYQFEEVLHISDNVKKKLPEGVKMTKYHVNFMGGDLGKDLTQAWAVAMALGVEDKVTVPLFEGVQKTQTIRSASDIRDVFINAGIKGEEYDAAWNSFVVKSLVAQQEKAAADVQLRGVPAMFVNGKYQLNPQGMDTSNMDVFVQQYADTVKYLSEKK</sequence>
<protein>
    <recommendedName>
        <fullName>Thiol:disulfide interchange protein DsbA</fullName>
    </recommendedName>
</protein>
<organism>
    <name type="scientific">Escherichia coli O157:H7</name>
    <dbReference type="NCBI Taxonomy" id="83334"/>
    <lineage>
        <taxon>Bacteria</taxon>
        <taxon>Pseudomonadati</taxon>
        <taxon>Pseudomonadota</taxon>
        <taxon>Gammaproteobacteria</taxon>
        <taxon>Enterobacterales</taxon>
        <taxon>Enterobacteriaceae</taxon>
        <taxon>Escherichia</taxon>
    </lineage>
</organism>
<keyword id="KW-1015">Disulfide bond</keyword>
<keyword id="KW-0574">Periplasm</keyword>
<keyword id="KW-0676">Redox-active center</keyword>
<keyword id="KW-1185">Reference proteome</keyword>
<keyword id="KW-0732">Signal</keyword>
<name>DSBA_ECO57</name>